<dbReference type="EMBL" id="CP000048">
    <property type="protein sequence ID" value="AAX17276.1"/>
    <property type="molecule type" value="Genomic_DNA"/>
</dbReference>
<dbReference type="RefSeq" id="WP_012422526.1">
    <property type="nucleotide sequence ID" value="NZ_CP073136.1"/>
</dbReference>
<dbReference type="SMR" id="B2S1C2"/>
<dbReference type="GeneID" id="71843610"/>
<dbReference type="KEGG" id="bhr:BH0780"/>
<dbReference type="HOGENOM" id="CLU_095424_4_1_12"/>
<dbReference type="Proteomes" id="UP000008834">
    <property type="component" value="Chromosome"/>
</dbReference>
<dbReference type="GO" id="GO:0022625">
    <property type="term" value="C:cytosolic large ribosomal subunit"/>
    <property type="evidence" value="ECO:0007669"/>
    <property type="project" value="TreeGrafter"/>
</dbReference>
<dbReference type="GO" id="GO:0003735">
    <property type="term" value="F:structural constituent of ribosome"/>
    <property type="evidence" value="ECO:0007669"/>
    <property type="project" value="InterPro"/>
</dbReference>
<dbReference type="GO" id="GO:0006412">
    <property type="term" value="P:translation"/>
    <property type="evidence" value="ECO:0007669"/>
    <property type="project" value="UniProtKB-UniRule"/>
</dbReference>
<dbReference type="FunFam" id="2.40.50.100:FF:000020">
    <property type="entry name" value="50S ribosomal protein L27"/>
    <property type="match status" value="1"/>
</dbReference>
<dbReference type="Gene3D" id="2.40.50.100">
    <property type="match status" value="1"/>
</dbReference>
<dbReference type="HAMAP" id="MF_00539">
    <property type="entry name" value="Ribosomal_bL27"/>
    <property type="match status" value="1"/>
</dbReference>
<dbReference type="InterPro" id="IPR001684">
    <property type="entry name" value="Ribosomal_bL27"/>
</dbReference>
<dbReference type="InterPro" id="IPR018261">
    <property type="entry name" value="Ribosomal_bL27_CS"/>
</dbReference>
<dbReference type="NCBIfam" id="TIGR00062">
    <property type="entry name" value="L27"/>
    <property type="match status" value="1"/>
</dbReference>
<dbReference type="PANTHER" id="PTHR15893:SF0">
    <property type="entry name" value="LARGE RIBOSOMAL SUBUNIT PROTEIN BL27M"/>
    <property type="match status" value="1"/>
</dbReference>
<dbReference type="PANTHER" id="PTHR15893">
    <property type="entry name" value="RIBOSOMAL PROTEIN L27"/>
    <property type="match status" value="1"/>
</dbReference>
<dbReference type="Pfam" id="PF01016">
    <property type="entry name" value="Ribosomal_L27"/>
    <property type="match status" value="1"/>
</dbReference>
<dbReference type="PRINTS" id="PR00063">
    <property type="entry name" value="RIBOSOMALL27"/>
</dbReference>
<dbReference type="SUPFAM" id="SSF110324">
    <property type="entry name" value="Ribosomal L27 protein-like"/>
    <property type="match status" value="1"/>
</dbReference>
<dbReference type="PROSITE" id="PS00831">
    <property type="entry name" value="RIBOSOMAL_L27"/>
    <property type="match status" value="1"/>
</dbReference>
<protein>
    <recommendedName>
        <fullName evidence="1">Large ribosomal subunit protein bL27</fullName>
    </recommendedName>
    <alternativeName>
        <fullName evidence="3">50S ribosomal protein L27</fullName>
    </alternativeName>
</protein>
<evidence type="ECO:0000255" key="1">
    <source>
        <dbReference type="HAMAP-Rule" id="MF_00539"/>
    </source>
</evidence>
<evidence type="ECO:0000256" key="2">
    <source>
        <dbReference type="SAM" id="MobiDB-lite"/>
    </source>
</evidence>
<evidence type="ECO:0000305" key="3"/>
<keyword id="KW-0687">Ribonucleoprotein</keyword>
<keyword id="KW-0689">Ribosomal protein</keyword>
<organism>
    <name type="scientific">Borrelia hermsii (strain HS1 / DAH)</name>
    <dbReference type="NCBI Taxonomy" id="314723"/>
    <lineage>
        <taxon>Bacteria</taxon>
        <taxon>Pseudomonadati</taxon>
        <taxon>Spirochaetota</taxon>
        <taxon>Spirochaetia</taxon>
        <taxon>Spirochaetales</taxon>
        <taxon>Borreliaceae</taxon>
        <taxon>Borrelia</taxon>
    </lineage>
</organism>
<reference key="1">
    <citation type="submission" date="2004-12" db="EMBL/GenBank/DDBJ databases">
        <title>The genome sequence of Borrelia hermsii and Borrelia turicatae: comparative analysis of two agents of endemic N. America relapsing fever.</title>
        <authorList>
            <person name="Porcella S.F."/>
            <person name="Raffel S.J."/>
            <person name="Schrumpf M.E."/>
            <person name="Montgomery B."/>
            <person name="Smith T."/>
            <person name="Schwan T.G."/>
        </authorList>
    </citation>
    <scope>NUCLEOTIDE SEQUENCE [LARGE SCALE GENOMIC DNA]</scope>
    <source>
        <strain>HS1 / DAH</strain>
    </source>
</reference>
<proteinExistence type="inferred from homology"/>
<sequence>MATSKSGGSSKNGRDSISKRLGVKRSGGQFVRAGEIIVRQRGTKFHKGKNSGLGRDYTIFALKDGIVEFKTYRGRKYINII</sequence>
<feature type="chain" id="PRO_1000128700" description="Large ribosomal subunit protein bL27">
    <location>
        <begin position="1"/>
        <end position="81"/>
    </location>
</feature>
<feature type="region of interest" description="Disordered" evidence="2">
    <location>
        <begin position="1"/>
        <end position="21"/>
    </location>
</feature>
<feature type="compositionally biased region" description="Polar residues" evidence="2">
    <location>
        <begin position="1"/>
        <end position="11"/>
    </location>
</feature>
<accession>B2S1C2</accession>
<comment type="similarity">
    <text evidence="1">Belongs to the bacterial ribosomal protein bL27 family.</text>
</comment>
<gene>
    <name evidence="1" type="primary">rpmA</name>
    <name type="ordered locus">BH0780</name>
</gene>
<name>RL27_BORHD</name>